<protein>
    <recommendedName>
        <fullName>COP9 signalosome complex subunit 5</fullName>
        <ecNumber>3.4.-.-</ecNumber>
    </recommendedName>
</protein>
<comment type="function">
    <text evidence="1">Catalytic component of the COP9 signalosome (CSN) complex that acts as an regulator of the ubiquitin (Ubl) conjugation pathway by mediating the deneddylation of the cullin subunit of SCF-type E3 ubiquitin-protein ligase complexes.</text>
</comment>
<comment type="subunit">
    <text evidence="1">Component of the COP9 signalosome (CSN) complex.</text>
</comment>
<comment type="subcellular location">
    <subcellularLocation>
        <location evidence="1">Cytoplasm</location>
    </subcellularLocation>
    <subcellularLocation>
        <location evidence="1">Nucleus</location>
    </subcellularLocation>
</comment>
<comment type="domain">
    <text evidence="1">The JAMM motif is essential for the protease activity of the CSN complex resulting in deneddylation of cullins. It constitutes the catalytic center of the complex (By similarity).</text>
</comment>
<comment type="similarity">
    <text evidence="4">Belongs to the peptidase M67A family. CSN5 subfamily.</text>
</comment>
<evidence type="ECO:0000250" key="1"/>
<evidence type="ECO:0000255" key="2">
    <source>
        <dbReference type="PROSITE-ProRule" id="PRU01182"/>
    </source>
</evidence>
<evidence type="ECO:0000256" key="3">
    <source>
        <dbReference type="SAM" id="MobiDB-lite"/>
    </source>
</evidence>
<evidence type="ECO:0000305" key="4"/>
<reference key="1">
    <citation type="journal article" date="2005" name="Nature">
        <title>Genomic sequence of the pathogenic and allergenic filamentous fungus Aspergillus fumigatus.</title>
        <authorList>
            <person name="Nierman W.C."/>
            <person name="Pain A."/>
            <person name="Anderson M.J."/>
            <person name="Wortman J.R."/>
            <person name="Kim H.S."/>
            <person name="Arroyo J."/>
            <person name="Berriman M."/>
            <person name="Abe K."/>
            <person name="Archer D.B."/>
            <person name="Bermejo C."/>
            <person name="Bennett J.W."/>
            <person name="Bowyer P."/>
            <person name="Chen D."/>
            <person name="Collins M."/>
            <person name="Coulsen R."/>
            <person name="Davies R."/>
            <person name="Dyer P.S."/>
            <person name="Farman M.L."/>
            <person name="Fedorova N."/>
            <person name="Fedorova N.D."/>
            <person name="Feldblyum T.V."/>
            <person name="Fischer R."/>
            <person name="Fosker N."/>
            <person name="Fraser A."/>
            <person name="Garcia J.L."/>
            <person name="Garcia M.J."/>
            <person name="Goble A."/>
            <person name="Goldman G.H."/>
            <person name="Gomi K."/>
            <person name="Griffith-Jones S."/>
            <person name="Gwilliam R."/>
            <person name="Haas B.J."/>
            <person name="Haas H."/>
            <person name="Harris D.E."/>
            <person name="Horiuchi H."/>
            <person name="Huang J."/>
            <person name="Humphray S."/>
            <person name="Jimenez J."/>
            <person name="Keller N."/>
            <person name="Khouri H."/>
            <person name="Kitamoto K."/>
            <person name="Kobayashi T."/>
            <person name="Konzack S."/>
            <person name="Kulkarni R."/>
            <person name="Kumagai T."/>
            <person name="Lafton A."/>
            <person name="Latge J.-P."/>
            <person name="Li W."/>
            <person name="Lord A."/>
            <person name="Lu C."/>
            <person name="Majoros W.H."/>
            <person name="May G.S."/>
            <person name="Miller B.L."/>
            <person name="Mohamoud Y."/>
            <person name="Molina M."/>
            <person name="Monod M."/>
            <person name="Mouyna I."/>
            <person name="Mulligan S."/>
            <person name="Murphy L.D."/>
            <person name="O'Neil S."/>
            <person name="Paulsen I."/>
            <person name="Penalva M.A."/>
            <person name="Pertea M."/>
            <person name="Price C."/>
            <person name="Pritchard B.L."/>
            <person name="Quail M.A."/>
            <person name="Rabbinowitsch E."/>
            <person name="Rawlins N."/>
            <person name="Rajandream M.A."/>
            <person name="Reichard U."/>
            <person name="Renauld H."/>
            <person name="Robson G.D."/>
            <person name="Rodriguez de Cordoba S."/>
            <person name="Rodriguez-Pena J.M."/>
            <person name="Ronning C.M."/>
            <person name="Rutter S."/>
            <person name="Salzberg S.L."/>
            <person name="Sanchez M."/>
            <person name="Sanchez-Ferrero J.C."/>
            <person name="Saunders D."/>
            <person name="Seeger K."/>
            <person name="Squares R."/>
            <person name="Squares S."/>
            <person name="Takeuchi M."/>
            <person name="Tekaia F."/>
            <person name="Turner G."/>
            <person name="Vazquez de Aldana C.R."/>
            <person name="Weidman J."/>
            <person name="White O."/>
            <person name="Woodward J.R."/>
            <person name="Yu J.-H."/>
            <person name="Fraser C.M."/>
            <person name="Galagan J.E."/>
            <person name="Asai K."/>
            <person name="Machida M."/>
            <person name="Hall N."/>
            <person name="Barrell B.G."/>
            <person name="Denning D.W."/>
        </authorList>
    </citation>
    <scope>NUCLEOTIDE SEQUENCE [LARGE SCALE GENOMIC DNA]</scope>
    <source>
        <strain>ATCC MYA-4609 / CBS 101355 / FGSC A1100 / Af293</strain>
    </source>
</reference>
<accession>Q4WZP2</accession>
<feature type="chain" id="PRO_0000194847" description="COP9 signalosome complex subunit 5">
    <location>
        <begin position="1"/>
        <end position="334"/>
    </location>
</feature>
<feature type="domain" description="MPN" evidence="2">
    <location>
        <begin position="51"/>
        <end position="187"/>
    </location>
</feature>
<feature type="region of interest" description="Disordered" evidence="3">
    <location>
        <begin position="273"/>
        <end position="294"/>
    </location>
</feature>
<feature type="short sequence motif" description="JAMM motif" evidence="2">
    <location>
        <begin position="134"/>
        <end position="147"/>
    </location>
</feature>
<feature type="binding site" evidence="2">
    <location>
        <position position="134"/>
    </location>
    <ligand>
        <name>Zn(2+)</name>
        <dbReference type="ChEBI" id="CHEBI:29105"/>
        <note>catalytic</note>
    </ligand>
</feature>
<feature type="binding site" evidence="2">
    <location>
        <position position="136"/>
    </location>
    <ligand>
        <name>Zn(2+)</name>
        <dbReference type="ChEBI" id="CHEBI:29105"/>
        <note>catalytic</note>
    </ligand>
</feature>
<feature type="binding site" evidence="2">
    <location>
        <position position="147"/>
    </location>
    <ligand>
        <name>Zn(2+)</name>
        <dbReference type="ChEBI" id="CHEBI:29105"/>
        <note>catalytic</note>
    </ligand>
</feature>
<name>CSN5_ASPFU</name>
<keyword id="KW-0963">Cytoplasm</keyword>
<keyword id="KW-0378">Hydrolase</keyword>
<keyword id="KW-0479">Metal-binding</keyword>
<keyword id="KW-0482">Metalloprotease</keyword>
<keyword id="KW-0539">Nucleus</keyword>
<keyword id="KW-0645">Protease</keyword>
<keyword id="KW-1185">Reference proteome</keyword>
<keyword id="KW-0736">Signalosome</keyword>
<keyword id="KW-0862">Zinc</keyword>
<gene>
    <name type="primary">csn5</name>
    <name type="ORF">AFUA_2G16250</name>
</gene>
<sequence length="334" mass="37356">MQAAQQSWELENTISLIDPQRDALYRYDEETHKALSAARPWAKDPHYFKSIRISAVALIKMTMHARSGGSLEVMGLMQGYILPETFVVTDAFRLPVEGTETRVNAQEEANEYMVSYLQSCRDAGRMENAVGWYHSHPGYGCWLSGIDVTTQDMQQLGGPFVAVVIDPERTISAGKVDIGAFRTFPKDYTPPKEGNEDEDYQTIPLSKAEDFGAYAHQYYSLEVSFFKSSLDTELLSQLWNKYWVATLSQSPLFTTRDYGSRQMMDLSQKVRRAARGIESSGSRGGATTPKDQQLEKIVRDGQRIVSEEVKGLLAAEVKMKLFQGIGEGTQTGAS</sequence>
<proteinExistence type="inferred from homology"/>
<dbReference type="EC" id="3.4.-.-"/>
<dbReference type="EMBL" id="AAHF01000001">
    <property type="protein sequence ID" value="EAL93923.2"/>
    <property type="molecule type" value="Genomic_DNA"/>
</dbReference>
<dbReference type="RefSeq" id="XP_755961.2">
    <property type="nucleotide sequence ID" value="XM_750868.2"/>
</dbReference>
<dbReference type="SMR" id="Q4WZP2"/>
<dbReference type="STRING" id="330879.Q4WZP2"/>
<dbReference type="EnsemblFungi" id="EAL93923">
    <property type="protein sequence ID" value="EAL93923"/>
    <property type="gene ID" value="AFUA_2G16250"/>
</dbReference>
<dbReference type="GeneID" id="3512817"/>
<dbReference type="KEGG" id="afm:AFUA_2G16250"/>
<dbReference type="VEuPathDB" id="FungiDB:Afu2g16250"/>
<dbReference type="eggNOG" id="KOG1554">
    <property type="taxonomic scope" value="Eukaryota"/>
</dbReference>
<dbReference type="HOGENOM" id="CLU_053034_0_2_1"/>
<dbReference type="InParanoid" id="Q4WZP2"/>
<dbReference type="OMA" id="VKMKLFQ"/>
<dbReference type="OrthoDB" id="605656at2759"/>
<dbReference type="Proteomes" id="UP000002530">
    <property type="component" value="Chromosome 2"/>
</dbReference>
<dbReference type="GO" id="GO:0008180">
    <property type="term" value="C:COP9 signalosome"/>
    <property type="evidence" value="ECO:0000318"/>
    <property type="project" value="GO_Central"/>
</dbReference>
<dbReference type="GO" id="GO:0005737">
    <property type="term" value="C:cytoplasm"/>
    <property type="evidence" value="ECO:0000318"/>
    <property type="project" value="GO_Central"/>
</dbReference>
<dbReference type="GO" id="GO:0019784">
    <property type="term" value="F:deNEDDylase activity"/>
    <property type="evidence" value="ECO:0000318"/>
    <property type="project" value="GO_Central"/>
</dbReference>
<dbReference type="GO" id="GO:0046872">
    <property type="term" value="F:metal ion binding"/>
    <property type="evidence" value="ECO:0007669"/>
    <property type="project" value="UniProtKB-KW"/>
</dbReference>
<dbReference type="GO" id="GO:0008237">
    <property type="term" value="F:metallopeptidase activity"/>
    <property type="evidence" value="ECO:0000318"/>
    <property type="project" value="GO_Central"/>
</dbReference>
<dbReference type="GO" id="GO:0000338">
    <property type="term" value="P:protein deneddylation"/>
    <property type="evidence" value="ECO:0007669"/>
    <property type="project" value="EnsemblFungi"/>
</dbReference>
<dbReference type="GO" id="GO:0006508">
    <property type="term" value="P:proteolysis"/>
    <property type="evidence" value="ECO:0007669"/>
    <property type="project" value="UniProtKB-KW"/>
</dbReference>
<dbReference type="GO" id="GO:0051726">
    <property type="term" value="P:regulation of cell cycle"/>
    <property type="evidence" value="ECO:0000318"/>
    <property type="project" value="GO_Central"/>
</dbReference>
<dbReference type="CDD" id="cd08069">
    <property type="entry name" value="MPN_RPN11_CSN5"/>
    <property type="match status" value="1"/>
</dbReference>
<dbReference type="FunFam" id="3.40.140.10:FF:000003">
    <property type="entry name" value="COP9 signalosome complex subunit 5"/>
    <property type="match status" value="1"/>
</dbReference>
<dbReference type="Gene3D" id="3.40.140.10">
    <property type="entry name" value="Cytidine Deaminase, domain 2"/>
    <property type="match status" value="1"/>
</dbReference>
<dbReference type="InterPro" id="IPR040961">
    <property type="entry name" value="CSN5_C"/>
</dbReference>
<dbReference type="InterPro" id="IPR000555">
    <property type="entry name" value="JAMM/MPN+_dom"/>
</dbReference>
<dbReference type="InterPro" id="IPR050242">
    <property type="entry name" value="JAMM_MPN+_peptidase_M67A"/>
</dbReference>
<dbReference type="InterPro" id="IPR037518">
    <property type="entry name" value="MPN"/>
</dbReference>
<dbReference type="PANTHER" id="PTHR10410">
    <property type="entry name" value="EUKARYOTIC TRANSLATION INITIATION FACTOR 3 -RELATED"/>
    <property type="match status" value="1"/>
</dbReference>
<dbReference type="Pfam" id="PF18323">
    <property type="entry name" value="CSN5_C"/>
    <property type="match status" value="1"/>
</dbReference>
<dbReference type="Pfam" id="PF01398">
    <property type="entry name" value="JAB"/>
    <property type="match status" value="1"/>
</dbReference>
<dbReference type="SMART" id="SM00232">
    <property type="entry name" value="JAB_MPN"/>
    <property type="match status" value="1"/>
</dbReference>
<dbReference type="SUPFAM" id="SSF102712">
    <property type="entry name" value="JAB1/MPN domain"/>
    <property type="match status" value="1"/>
</dbReference>
<dbReference type="PROSITE" id="PS50249">
    <property type="entry name" value="MPN"/>
    <property type="match status" value="1"/>
</dbReference>
<organism>
    <name type="scientific">Aspergillus fumigatus (strain ATCC MYA-4609 / CBS 101355 / FGSC A1100 / Af293)</name>
    <name type="common">Neosartorya fumigata</name>
    <dbReference type="NCBI Taxonomy" id="330879"/>
    <lineage>
        <taxon>Eukaryota</taxon>
        <taxon>Fungi</taxon>
        <taxon>Dikarya</taxon>
        <taxon>Ascomycota</taxon>
        <taxon>Pezizomycotina</taxon>
        <taxon>Eurotiomycetes</taxon>
        <taxon>Eurotiomycetidae</taxon>
        <taxon>Eurotiales</taxon>
        <taxon>Aspergillaceae</taxon>
        <taxon>Aspergillus</taxon>
        <taxon>Aspergillus subgen. Fumigati</taxon>
    </lineage>
</organism>